<name>FTSW_MARN8</name>
<comment type="function">
    <text evidence="1">Peptidoglycan polymerase that is essential for cell division.</text>
</comment>
<comment type="catalytic activity">
    <reaction evidence="1">
        <text>[GlcNAc-(1-&gt;4)-Mur2Ac(oyl-L-Ala-gamma-D-Glu-L-Lys-D-Ala-D-Ala)](n)-di-trans,octa-cis-undecaprenyl diphosphate + beta-D-GlcNAc-(1-&gt;4)-Mur2Ac(oyl-L-Ala-gamma-D-Glu-L-Lys-D-Ala-D-Ala)-di-trans,octa-cis-undecaprenyl diphosphate = [GlcNAc-(1-&gt;4)-Mur2Ac(oyl-L-Ala-gamma-D-Glu-L-Lys-D-Ala-D-Ala)](n+1)-di-trans,octa-cis-undecaprenyl diphosphate + di-trans,octa-cis-undecaprenyl diphosphate + H(+)</text>
        <dbReference type="Rhea" id="RHEA:23708"/>
        <dbReference type="Rhea" id="RHEA-COMP:9602"/>
        <dbReference type="Rhea" id="RHEA-COMP:9603"/>
        <dbReference type="ChEBI" id="CHEBI:15378"/>
        <dbReference type="ChEBI" id="CHEBI:58405"/>
        <dbReference type="ChEBI" id="CHEBI:60033"/>
        <dbReference type="ChEBI" id="CHEBI:78435"/>
        <dbReference type="EC" id="2.4.99.28"/>
    </reaction>
</comment>
<comment type="pathway">
    <text evidence="1">Cell wall biogenesis; peptidoglycan biosynthesis.</text>
</comment>
<comment type="subcellular location">
    <subcellularLocation>
        <location evidence="1">Cell inner membrane</location>
        <topology evidence="1">Multi-pass membrane protein</topology>
    </subcellularLocation>
    <text evidence="1">Localizes to the division septum.</text>
</comment>
<comment type="similarity">
    <text evidence="1">Belongs to the SEDS family. FtsW subfamily.</text>
</comment>
<organism>
    <name type="scientific">Marinobacter nauticus (strain ATCC 700491 / DSM 11845 / VT8)</name>
    <name type="common">Marinobacter aquaeolei</name>
    <dbReference type="NCBI Taxonomy" id="351348"/>
    <lineage>
        <taxon>Bacteria</taxon>
        <taxon>Pseudomonadati</taxon>
        <taxon>Pseudomonadota</taxon>
        <taxon>Gammaproteobacteria</taxon>
        <taxon>Pseudomonadales</taxon>
        <taxon>Marinobacteraceae</taxon>
        <taxon>Marinobacter</taxon>
    </lineage>
</organism>
<reference key="1">
    <citation type="journal article" date="2011" name="Appl. Environ. Microbiol.">
        <title>Genomic potential of Marinobacter aquaeolei, a biogeochemical 'opportunitroph'.</title>
        <authorList>
            <person name="Singer E."/>
            <person name="Webb E.A."/>
            <person name="Nelson W.C."/>
            <person name="Heidelberg J.F."/>
            <person name="Ivanova N."/>
            <person name="Pati A."/>
            <person name="Edwards K.J."/>
        </authorList>
    </citation>
    <scope>NUCLEOTIDE SEQUENCE [LARGE SCALE GENOMIC DNA]</scope>
    <source>
        <strain>ATCC 700491 / DSM 11845 / VT8</strain>
    </source>
</reference>
<keyword id="KW-0131">Cell cycle</keyword>
<keyword id="KW-0132">Cell division</keyword>
<keyword id="KW-0997">Cell inner membrane</keyword>
<keyword id="KW-1003">Cell membrane</keyword>
<keyword id="KW-0133">Cell shape</keyword>
<keyword id="KW-0961">Cell wall biogenesis/degradation</keyword>
<keyword id="KW-0328">Glycosyltransferase</keyword>
<keyword id="KW-0472">Membrane</keyword>
<keyword id="KW-0573">Peptidoglycan synthesis</keyword>
<keyword id="KW-0808">Transferase</keyword>
<keyword id="KW-0812">Transmembrane</keyword>
<keyword id="KW-1133">Transmembrane helix</keyword>
<sequence length="399" mass="42420">MQAGVSVPHYQGMAGELQPLPVLIITSVALLVTGVVMISSASMDMAAATLGNSYHYVIRQILFAGLGCATALVAVNVPVSWWERSGWLLLGIGLLVLVLVLTPLGRTVNGSTRWIPMGLFNVQVSEVAKLCLIAYLAGYVVRRREELLHTWPGFLKPLGVLGVASVLLVIQPDFGATVVLVTAAAGMIFLSGVRLSRFMPLIGVLAALGTILVVTQPYRLKRVISYLDPWKDQFDSGYQLTQSLIAFGRGEWVGVGLGNSVQKLFFLPEAHTDFIYAIIAEEFGLLGALVVLGLFAALVVSGLVIARRAEKAGMAFGACFSYGITLLIGLQAGINMAVSTGLLPTKGLTLPLVSYGGSSLMVTCIGIAVIARVELERQDRARVASETKGNRTKGGAVYD</sequence>
<accession>A1U3F9</accession>
<proteinExistence type="inferred from homology"/>
<feature type="chain" id="PRO_0000415195" description="Probable peptidoglycan glycosyltransferase FtsW">
    <location>
        <begin position="1"/>
        <end position="399"/>
    </location>
</feature>
<feature type="transmembrane region" description="Helical" evidence="1">
    <location>
        <begin position="19"/>
        <end position="39"/>
    </location>
</feature>
<feature type="transmembrane region" description="Helical" evidence="1">
    <location>
        <begin position="61"/>
        <end position="81"/>
    </location>
</feature>
<feature type="transmembrane region" description="Helical" evidence="1">
    <location>
        <begin position="85"/>
        <end position="105"/>
    </location>
</feature>
<feature type="transmembrane region" description="Helical" evidence="1">
    <location>
        <begin position="114"/>
        <end position="134"/>
    </location>
</feature>
<feature type="transmembrane region" description="Helical" evidence="1">
    <location>
        <begin position="160"/>
        <end position="180"/>
    </location>
</feature>
<feature type="transmembrane region" description="Helical" evidence="1">
    <location>
        <begin position="198"/>
        <end position="218"/>
    </location>
</feature>
<feature type="transmembrane region" description="Helical" evidence="1">
    <location>
        <begin position="285"/>
        <end position="305"/>
    </location>
</feature>
<feature type="transmembrane region" description="Helical" evidence="1">
    <location>
        <begin position="314"/>
        <end position="334"/>
    </location>
</feature>
<feature type="transmembrane region" description="Helical" evidence="1">
    <location>
        <begin position="350"/>
        <end position="370"/>
    </location>
</feature>
<evidence type="ECO:0000255" key="1">
    <source>
        <dbReference type="HAMAP-Rule" id="MF_00913"/>
    </source>
</evidence>
<dbReference type="EC" id="2.4.99.28" evidence="1"/>
<dbReference type="EMBL" id="CP000514">
    <property type="protein sequence ID" value="ABM19528.1"/>
    <property type="molecule type" value="Genomic_DNA"/>
</dbReference>
<dbReference type="RefSeq" id="WP_011785912.1">
    <property type="nucleotide sequence ID" value="NC_008740.1"/>
</dbReference>
<dbReference type="SMR" id="A1U3F9"/>
<dbReference type="STRING" id="351348.Maqu_2453"/>
<dbReference type="KEGG" id="maq:Maqu_2453"/>
<dbReference type="eggNOG" id="COG0772">
    <property type="taxonomic scope" value="Bacteria"/>
</dbReference>
<dbReference type="HOGENOM" id="CLU_029243_1_1_6"/>
<dbReference type="OrthoDB" id="9768187at2"/>
<dbReference type="UniPathway" id="UPA00219"/>
<dbReference type="Proteomes" id="UP000000998">
    <property type="component" value="Chromosome"/>
</dbReference>
<dbReference type="GO" id="GO:0032153">
    <property type="term" value="C:cell division site"/>
    <property type="evidence" value="ECO:0007669"/>
    <property type="project" value="UniProtKB-UniRule"/>
</dbReference>
<dbReference type="GO" id="GO:0005886">
    <property type="term" value="C:plasma membrane"/>
    <property type="evidence" value="ECO:0007669"/>
    <property type="project" value="UniProtKB-SubCell"/>
</dbReference>
<dbReference type="GO" id="GO:0015648">
    <property type="term" value="F:lipid-linked peptidoglycan transporter activity"/>
    <property type="evidence" value="ECO:0007669"/>
    <property type="project" value="TreeGrafter"/>
</dbReference>
<dbReference type="GO" id="GO:0008955">
    <property type="term" value="F:peptidoglycan glycosyltransferase activity"/>
    <property type="evidence" value="ECO:0007669"/>
    <property type="project" value="UniProtKB-UniRule"/>
</dbReference>
<dbReference type="GO" id="GO:0071555">
    <property type="term" value="P:cell wall organization"/>
    <property type="evidence" value="ECO:0007669"/>
    <property type="project" value="UniProtKB-KW"/>
</dbReference>
<dbReference type="GO" id="GO:0043093">
    <property type="term" value="P:FtsZ-dependent cytokinesis"/>
    <property type="evidence" value="ECO:0007669"/>
    <property type="project" value="UniProtKB-UniRule"/>
</dbReference>
<dbReference type="GO" id="GO:0009252">
    <property type="term" value="P:peptidoglycan biosynthetic process"/>
    <property type="evidence" value="ECO:0007669"/>
    <property type="project" value="UniProtKB-UniRule"/>
</dbReference>
<dbReference type="GO" id="GO:0008360">
    <property type="term" value="P:regulation of cell shape"/>
    <property type="evidence" value="ECO:0007669"/>
    <property type="project" value="UniProtKB-KW"/>
</dbReference>
<dbReference type="HAMAP" id="MF_00913">
    <property type="entry name" value="PGT_FtsW_proteobact"/>
    <property type="match status" value="1"/>
</dbReference>
<dbReference type="InterPro" id="IPR018365">
    <property type="entry name" value="Cell_cycle_FtsW-rel_CS"/>
</dbReference>
<dbReference type="InterPro" id="IPR013437">
    <property type="entry name" value="FtsW"/>
</dbReference>
<dbReference type="InterPro" id="IPR001182">
    <property type="entry name" value="FtsW/RodA"/>
</dbReference>
<dbReference type="NCBIfam" id="TIGR02614">
    <property type="entry name" value="ftsW"/>
    <property type="match status" value="1"/>
</dbReference>
<dbReference type="PANTHER" id="PTHR30474">
    <property type="entry name" value="CELL CYCLE PROTEIN"/>
    <property type="match status" value="1"/>
</dbReference>
<dbReference type="PANTHER" id="PTHR30474:SF2">
    <property type="entry name" value="PEPTIDOGLYCAN GLYCOSYLTRANSFERASE FTSW-RELATED"/>
    <property type="match status" value="1"/>
</dbReference>
<dbReference type="Pfam" id="PF01098">
    <property type="entry name" value="FTSW_RODA_SPOVE"/>
    <property type="match status" value="1"/>
</dbReference>
<dbReference type="PROSITE" id="PS00428">
    <property type="entry name" value="FTSW_RODA_SPOVE"/>
    <property type="match status" value="1"/>
</dbReference>
<protein>
    <recommendedName>
        <fullName evidence="1">Probable peptidoglycan glycosyltransferase FtsW</fullName>
        <shortName evidence="1">PGT</shortName>
        <ecNumber evidence="1">2.4.99.28</ecNumber>
    </recommendedName>
    <alternativeName>
        <fullName evidence="1">Cell division protein FtsW</fullName>
    </alternativeName>
    <alternativeName>
        <fullName evidence="1">Cell wall polymerase</fullName>
    </alternativeName>
    <alternativeName>
        <fullName evidence="1">Peptidoglycan polymerase</fullName>
        <shortName evidence="1">PG polymerase</shortName>
    </alternativeName>
</protein>
<gene>
    <name evidence="1" type="primary">ftsW</name>
    <name type="ordered locus">Maqu_2453</name>
</gene>